<proteinExistence type="inferred from homology"/>
<evidence type="ECO:0000255" key="1">
    <source>
        <dbReference type="HAMAP-Rule" id="MF_01864"/>
    </source>
</evidence>
<evidence type="ECO:0000255" key="2">
    <source>
        <dbReference type="PROSITE-ProRule" id="PRU01266"/>
    </source>
</evidence>
<sequence>MSMKLHVKTWGCQMNEYDSSKMADLLNSTNGYISVEHAEDADVVLLNTCSIREKAQEKVFHQLGRWKKLKVNKPNLVIGVGGCVASQEGKAIRSRAPFVDIVFGPQTLHRLPEMIKEVQENKGTVVDVSFPEIEKFDSLPEPKADGATAFVSIMEGCSKYCSFCVVPYTRGEEVSRPLDDVLLEVAQLAEQGVREVTLLGQNVNSYLGATYDGDTCSFAELLRFVASIDGIDRLRYVTSNPIDFSDEIIAVYEDTPELVNFLHLPVQAGSDRILAAMKRGHTVAQYKDQIARLLQVRPELTVSSDFIIGFPNETDHDFEQTMDLIKYINFDTSYSFIYSQRPGTPAADMPDDVTLETKKQRLAILQDRIQQQSQGIGRKMVGSVQRILVEGPSRKNIMELCGRTENNRIVNFEGDHRSIGGFVDVEITEVHTNSIRGKFIRGEAEMNLRESIRPSDIVNKHENKSAVNSYIPA</sequence>
<feature type="chain" id="PRO_0000374474" description="tRNA-2-methylthio-N(6)-dimethylallyladenosine synthase">
    <location>
        <begin position="1"/>
        <end position="473"/>
    </location>
</feature>
<feature type="domain" description="MTTase N-terminal" evidence="1">
    <location>
        <begin position="3"/>
        <end position="120"/>
    </location>
</feature>
<feature type="domain" description="Radical SAM core" evidence="2">
    <location>
        <begin position="143"/>
        <end position="375"/>
    </location>
</feature>
<feature type="domain" description="TRAM" evidence="1">
    <location>
        <begin position="378"/>
        <end position="441"/>
    </location>
</feature>
<feature type="binding site" evidence="1">
    <location>
        <position position="12"/>
    </location>
    <ligand>
        <name>[4Fe-4S] cluster</name>
        <dbReference type="ChEBI" id="CHEBI:49883"/>
        <label>1</label>
    </ligand>
</feature>
<feature type="binding site" evidence="1">
    <location>
        <position position="49"/>
    </location>
    <ligand>
        <name>[4Fe-4S] cluster</name>
        <dbReference type="ChEBI" id="CHEBI:49883"/>
        <label>1</label>
    </ligand>
</feature>
<feature type="binding site" evidence="1">
    <location>
        <position position="83"/>
    </location>
    <ligand>
        <name>[4Fe-4S] cluster</name>
        <dbReference type="ChEBI" id="CHEBI:49883"/>
        <label>1</label>
    </ligand>
</feature>
<feature type="binding site" evidence="1">
    <location>
        <position position="157"/>
    </location>
    <ligand>
        <name>[4Fe-4S] cluster</name>
        <dbReference type="ChEBI" id="CHEBI:49883"/>
        <label>2</label>
        <note>4Fe-4S-S-AdoMet</note>
    </ligand>
</feature>
<feature type="binding site" evidence="1">
    <location>
        <position position="161"/>
    </location>
    <ligand>
        <name>[4Fe-4S] cluster</name>
        <dbReference type="ChEBI" id="CHEBI:49883"/>
        <label>2</label>
        <note>4Fe-4S-S-AdoMet</note>
    </ligand>
</feature>
<feature type="binding site" evidence="1">
    <location>
        <position position="164"/>
    </location>
    <ligand>
        <name>[4Fe-4S] cluster</name>
        <dbReference type="ChEBI" id="CHEBI:49883"/>
        <label>2</label>
        <note>4Fe-4S-S-AdoMet</note>
    </ligand>
</feature>
<dbReference type="EC" id="2.8.4.3" evidence="1"/>
<dbReference type="EMBL" id="CP000510">
    <property type="protein sequence ID" value="ABM02389.1"/>
    <property type="molecule type" value="Genomic_DNA"/>
</dbReference>
<dbReference type="RefSeq" id="WP_011768948.1">
    <property type="nucleotide sequence ID" value="NC_008709.1"/>
</dbReference>
<dbReference type="SMR" id="A1SSC4"/>
<dbReference type="STRING" id="357804.Ping_0535"/>
<dbReference type="KEGG" id="pin:Ping_0535"/>
<dbReference type="eggNOG" id="COG0621">
    <property type="taxonomic scope" value="Bacteria"/>
</dbReference>
<dbReference type="HOGENOM" id="CLU_018697_2_0_6"/>
<dbReference type="OrthoDB" id="9805215at2"/>
<dbReference type="Proteomes" id="UP000000639">
    <property type="component" value="Chromosome"/>
</dbReference>
<dbReference type="GO" id="GO:0005829">
    <property type="term" value="C:cytosol"/>
    <property type="evidence" value="ECO:0007669"/>
    <property type="project" value="TreeGrafter"/>
</dbReference>
<dbReference type="GO" id="GO:0051539">
    <property type="term" value="F:4 iron, 4 sulfur cluster binding"/>
    <property type="evidence" value="ECO:0007669"/>
    <property type="project" value="UniProtKB-UniRule"/>
</dbReference>
<dbReference type="GO" id="GO:0046872">
    <property type="term" value="F:metal ion binding"/>
    <property type="evidence" value="ECO:0007669"/>
    <property type="project" value="UniProtKB-KW"/>
</dbReference>
<dbReference type="GO" id="GO:0035597">
    <property type="term" value="F:N6-isopentenyladenosine methylthiotransferase activity"/>
    <property type="evidence" value="ECO:0007669"/>
    <property type="project" value="TreeGrafter"/>
</dbReference>
<dbReference type="CDD" id="cd01335">
    <property type="entry name" value="Radical_SAM"/>
    <property type="match status" value="1"/>
</dbReference>
<dbReference type="FunFam" id="3.40.50.12160:FF:000001">
    <property type="entry name" value="tRNA-2-methylthio-N(6)-dimethylallyladenosine synthase"/>
    <property type="match status" value="1"/>
</dbReference>
<dbReference type="FunFam" id="3.80.30.20:FF:000001">
    <property type="entry name" value="tRNA-2-methylthio-N(6)-dimethylallyladenosine synthase 2"/>
    <property type="match status" value="1"/>
</dbReference>
<dbReference type="Gene3D" id="3.40.50.12160">
    <property type="entry name" value="Methylthiotransferase, N-terminal domain"/>
    <property type="match status" value="1"/>
</dbReference>
<dbReference type="Gene3D" id="3.80.30.20">
    <property type="entry name" value="tm_1862 like domain"/>
    <property type="match status" value="1"/>
</dbReference>
<dbReference type="HAMAP" id="MF_01864">
    <property type="entry name" value="tRNA_metthiotr_MiaB"/>
    <property type="match status" value="1"/>
</dbReference>
<dbReference type="InterPro" id="IPR006638">
    <property type="entry name" value="Elp3/MiaA/NifB-like_rSAM"/>
</dbReference>
<dbReference type="InterPro" id="IPR005839">
    <property type="entry name" value="Methylthiotransferase"/>
</dbReference>
<dbReference type="InterPro" id="IPR020612">
    <property type="entry name" value="Methylthiotransferase_CS"/>
</dbReference>
<dbReference type="InterPro" id="IPR013848">
    <property type="entry name" value="Methylthiotransferase_N"/>
</dbReference>
<dbReference type="InterPro" id="IPR038135">
    <property type="entry name" value="Methylthiotransferase_N_sf"/>
</dbReference>
<dbReference type="InterPro" id="IPR006463">
    <property type="entry name" value="MiaB_methiolase"/>
</dbReference>
<dbReference type="InterPro" id="IPR007197">
    <property type="entry name" value="rSAM"/>
</dbReference>
<dbReference type="InterPro" id="IPR023404">
    <property type="entry name" value="rSAM_horseshoe"/>
</dbReference>
<dbReference type="InterPro" id="IPR002792">
    <property type="entry name" value="TRAM_dom"/>
</dbReference>
<dbReference type="NCBIfam" id="TIGR01574">
    <property type="entry name" value="miaB-methiolase"/>
    <property type="match status" value="1"/>
</dbReference>
<dbReference type="NCBIfam" id="TIGR00089">
    <property type="entry name" value="MiaB/RimO family radical SAM methylthiotransferase"/>
    <property type="match status" value="1"/>
</dbReference>
<dbReference type="PANTHER" id="PTHR43020">
    <property type="entry name" value="CDK5 REGULATORY SUBUNIT-ASSOCIATED PROTEIN 1"/>
    <property type="match status" value="1"/>
</dbReference>
<dbReference type="PANTHER" id="PTHR43020:SF2">
    <property type="entry name" value="MITOCHONDRIAL TRNA METHYLTHIOTRANSFERASE CDK5RAP1"/>
    <property type="match status" value="1"/>
</dbReference>
<dbReference type="Pfam" id="PF04055">
    <property type="entry name" value="Radical_SAM"/>
    <property type="match status" value="1"/>
</dbReference>
<dbReference type="Pfam" id="PF01938">
    <property type="entry name" value="TRAM"/>
    <property type="match status" value="1"/>
</dbReference>
<dbReference type="Pfam" id="PF00919">
    <property type="entry name" value="UPF0004"/>
    <property type="match status" value="1"/>
</dbReference>
<dbReference type="SFLD" id="SFLDF00273">
    <property type="entry name" value="(dimethylallyl)adenosine_tRNA"/>
    <property type="match status" value="1"/>
</dbReference>
<dbReference type="SFLD" id="SFLDG01082">
    <property type="entry name" value="B12-binding_domain_containing"/>
    <property type="match status" value="1"/>
</dbReference>
<dbReference type="SFLD" id="SFLDS00029">
    <property type="entry name" value="Radical_SAM"/>
    <property type="match status" value="1"/>
</dbReference>
<dbReference type="SMART" id="SM00729">
    <property type="entry name" value="Elp3"/>
    <property type="match status" value="1"/>
</dbReference>
<dbReference type="SUPFAM" id="SSF102114">
    <property type="entry name" value="Radical SAM enzymes"/>
    <property type="match status" value="1"/>
</dbReference>
<dbReference type="PROSITE" id="PS51449">
    <property type="entry name" value="MTTASE_N"/>
    <property type="match status" value="1"/>
</dbReference>
<dbReference type="PROSITE" id="PS01278">
    <property type="entry name" value="MTTASE_RADICAL"/>
    <property type="match status" value="1"/>
</dbReference>
<dbReference type="PROSITE" id="PS51918">
    <property type="entry name" value="RADICAL_SAM"/>
    <property type="match status" value="1"/>
</dbReference>
<dbReference type="PROSITE" id="PS50926">
    <property type="entry name" value="TRAM"/>
    <property type="match status" value="1"/>
</dbReference>
<protein>
    <recommendedName>
        <fullName evidence="1">tRNA-2-methylthio-N(6)-dimethylallyladenosine synthase</fullName>
        <ecNumber evidence="1">2.8.4.3</ecNumber>
    </recommendedName>
    <alternativeName>
        <fullName evidence="1">(Dimethylallyl)adenosine tRNA methylthiotransferase MiaB</fullName>
    </alternativeName>
    <alternativeName>
        <fullName evidence="1">tRNA-i(6)A37 methylthiotransferase</fullName>
    </alternativeName>
</protein>
<keyword id="KW-0004">4Fe-4S</keyword>
<keyword id="KW-0963">Cytoplasm</keyword>
<keyword id="KW-0408">Iron</keyword>
<keyword id="KW-0411">Iron-sulfur</keyword>
<keyword id="KW-0479">Metal-binding</keyword>
<keyword id="KW-1185">Reference proteome</keyword>
<keyword id="KW-0949">S-adenosyl-L-methionine</keyword>
<keyword id="KW-0808">Transferase</keyword>
<keyword id="KW-0819">tRNA processing</keyword>
<reference key="1">
    <citation type="journal article" date="2008" name="BMC Genomics">
        <title>Genomics of an extreme psychrophile, Psychromonas ingrahamii.</title>
        <authorList>
            <person name="Riley M."/>
            <person name="Staley J.T."/>
            <person name="Danchin A."/>
            <person name="Wang T.Z."/>
            <person name="Brettin T.S."/>
            <person name="Hauser L.J."/>
            <person name="Land M.L."/>
            <person name="Thompson L.S."/>
        </authorList>
    </citation>
    <scope>NUCLEOTIDE SEQUENCE [LARGE SCALE GENOMIC DNA]</scope>
    <source>
        <strain>DSM 17664 / CCUG 51855 / 37</strain>
    </source>
</reference>
<accession>A1SSC4</accession>
<gene>
    <name evidence="1" type="primary">miaB</name>
    <name type="ordered locus">Ping_0535</name>
</gene>
<organism>
    <name type="scientific">Psychromonas ingrahamii (strain DSM 17664 / CCUG 51855 / 37)</name>
    <dbReference type="NCBI Taxonomy" id="357804"/>
    <lineage>
        <taxon>Bacteria</taxon>
        <taxon>Pseudomonadati</taxon>
        <taxon>Pseudomonadota</taxon>
        <taxon>Gammaproteobacteria</taxon>
        <taxon>Alteromonadales</taxon>
        <taxon>Psychromonadaceae</taxon>
        <taxon>Psychromonas</taxon>
    </lineage>
</organism>
<comment type="function">
    <text evidence="1">Catalyzes the methylthiolation of N6-(dimethylallyl)adenosine (i(6)A), leading to the formation of 2-methylthio-N6-(dimethylallyl)adenosine (ms(2)i(6)A) at position 37 in tRNAs that read codons beginning with uridine.</text>
</comment>
<comment type="catalytic activity">
    <reaction evidence="1">
        <text>N(6)-dimethylallyladenosine(37) in tRNA + (sulfur carrier)-SH + AH2 + 2 S-adenosyl-L-methionine = 2-methylsulfanyl-N(6)-dimethylallyladenosine(37) in tRNA + (sulfur carrier)-H + 5'-deoxyadenosine + L-methionine + A + S-adenosyl-L-homocysteine + 2 H(+)</text>
        <dbReference type="Rhea" id="RHEA:37067"/>
        <dbReference type="Rhea" id="RHEA-COMP:10375"/>
        <dbReference type="Rhea" id="RHEA-COMP:10376"/>
        <dbReference type="Rhea" id="RHEA-COMP:14737"/>
        <dbReference type="Rhea" id="RHEA-COMP:14739"/>
        <dbReference type="ChEBI" id="CHEBI:13193"/>
        <dbReference type="ChEBI" id="CHEBI:15378"/>
        <dbReference type="ChEBI" id="CHEBI:17319"/>
        <dbReference type="ChEBI" id="CHEBI:17499"/>
        <dbReference type="ChEBI" id="CHEBI:29917"/>
        <dbReference type="ChEBI" id="CHEBI:57844"/>
        <dbReference type="ChEBI" id="CHEBI:57856"/>
        <dbReference type="ChEBI" id="CHEBI:59789"/>
        <dbReference type="ChEBI" id="CHEBI:64428"/>
        <dbReference type="ChEBI" id="CHEBI:74415"/>
        <dbReference type="ChEBI" id="CHEBI:74417"/>
        <dbReference type="EC" id="2.8.4.3"/>
    </reaction>
</comment>
<comment type="cofactor">
    <cofactor evidence="1">
        <name>[4Fe-4S] cluster</name>
        <dbReference type="ChEBI" id="CHEBI:49883"/>
    </cofactor>
    <text evidence="1">Binds 2 [4Fe-4S] clusters. One cluster is coordinated with 3 cysteines and an exchangeable S-adenosyl-L-methionine.</text>
</comment>
<comment type="subunit">
    <text evidence="1">Monomer.</text>
</comment>
<comment type="subcellular location">
    <subcellularLocation>
        <location evidence="1">Cytoplasm</location>
    </subcellularLocation>
</comment>
<comment type="similarity">
    <text evidence="1">Belongs to the methylthiotransferase family. MiaB subfamily.</text>
</comment>
<name>MIAB_PSYIN</name>